<evidence type="ECO:0000255" key="1">
    <source>
        <dbReference type="HAMAP-Rule" id="MF_01325"/>
    </source>
</evidence>
<evidence type="ECO:0000256" key="2">
    <source>
        <dbReference type="SAM" id="MobiDB-lite"/>
    </source>
</evidence>
<evidence type="ECO:0000305" key="3"/>
<proteinExistence type="inferred from homology"/>
<protein>
    <recommendedName>
        <fullName evidence="1">Large ribosomal subunit protein uL3</fullName>
    </recommendedName>
    <alternativeName>
        <fullName evidence="3">50S ribosomal protein L3</fullName>
    </alternativeName>
</protein>
<feature type="chain" id="PRO_1000052049" description="Large ribosomal subunit protein uL3">
    <location>
        <begin position="1"/>
        <end position="234"/>
    </location>
</feature>
<feature type="region of interest" description="Disordered" evidence="2">
    <location>
        <begin position="137"/>
        <end position="156"/>
    </location>
</feature>
<organism>
    <name type="scientific">Frankia alni (strain DSM 45986 / CECT 9034 / ACN14a)</name>
    <dbReference type="NCBI Taxonomy" id="326424"/>
    <lineage>
        <taxon>Bacteria</taxon>
        <taxon>Bacillati</taxon>
        <taxon>Actinomycetota</taxon>
        <taxon>Actinomycetes</taxon>
        <taxon>Frankiales</taxon>
        <taxon>Frankiaceae</taxon>
        <taxon>Frankia</taxon>
    </lineage>
</organism>
<name>RL3_FRAAA</name>
<gene>
    <name evidence="1" type="primary">rplC</name>
    <name type="ordered locus">FRAAL1081</name>
</gene>
<accession>Q0RRS1</accession>
<comment type="function">
    <text evidence="1">One of the primary rRNA binding proteins, it binds directly near the 3'-end of the 23S rRNA, where it nucleates assembly of the 50S subunit.</text>
</comment>
<comment type="subunit">
    <text evidence="1">Part of the 50S ribosomal subunit. Forms a cluster with proteins L14 and L19.</text>
</comment>
<comment type="similarity">
    <text evidence="1">Belongs to the universal ribosomal protein uL3 family.</text>
</comment>
<keyword id="KW-1185">Reference proteome</keyword>
<keyword id="KW-0687">Ribonucleoprotein</keyword>
<keyword id="KW-0689">Ribosomal protein</keyword>
<keyword id="KW-0694">RNA-binding</keyword>
<keyword id="KW-0699">rRNA-binding</keyword>
<sequence>MLIRNYRGLLGTKLGMTQVWDANNRVVPVTVIKAGPNVVTQVKTPDSDGYSAVQLGYGEIDPRKINKPARGHFATSGVTPRRHLVELRTADAGNYRPGQELTGEVFAEGTVVDVTGTSKGKGFAGVMKRHGFKGLGAGHGVERKHRSPGSVGGCATPGRVFKGLRMAGRMGHARTTTPGLTIHAVDTERGFLLVKGAIPGPDGGLVFVRSAAKRPAPEAIAPAATVGAGEEVSA</sequence>
<dbReference type="EMBL" id="CT573213">
    <property type="protein sequence ID" value="CAJ59746.1"/>
    <property type="molecule type" value="Genomic_DNA"/>
</dbReference>
<dbReference type="RefSeq" id="WP_011602300.1">
    <property type="nucleotide sequence ID" value="NC_008278.1"/>
</dbReference>
<dbReference type="SMR" id="Q0RRS1"/>
<dbReference type="STRING" id="326424.FRAAL1081"/>
<dbReference type="KEGG" id="fal:FRAAL1081"/>
<dbReference type="eggNOG" id="COG0087">
    <property type="taxonomic scope" value="Bacteria"/>
</dbReference>
<dbReference type="HOGENOM" id="CLU_044142_4_1_11"/>
<dbReference type="OrthoDB" id="9806135at2"/>
<dbReference type="Proteomes" id="UP000000657">
    <property type="component" value="Chromosome"/>
</dbReference>
<dbReference type="GO" id="GO:0022625">
    <property type="term" value="C:cytosolic large ribosomal subunit"/>
    <property type="evidence" value="ECO:0007669"/>
    <property type="project" value="TreeGrafter"/>
</dbReference>
<dbReference type="GO" id="GO:0019843">
    <property type="term" value="F:rRNA binding"/>
    <property type="evidence" value="ECO:0007669"/>
    <property type="project" value="UniProtKB-UniRule"/>
</dbReference>
<dbReference type="GO" id="GO:0003735">
    <property type="term" value="F:structural constituent of ribosome"/>
    <property type="evidence" value="ECO:0007669"/>
    <property type="project" value="InterPro"/>
</dbReference>
<dbReference type="GO" id="GO:0006412">
    <property type="term" value="P:translation"/>
    <property type="evidence" value="ECO:0007669"/>
    <property type="project" value="UniProtKB-UniRule"/>
</dbReference>
<dbReference type="FunFam" id="2.40.30.10:FF:000004">
    <property type="entry name" value="50S ribosomal protein L3"/>
    <property type="match status" value="1"/>
</dbReference>
<dbReference type="FunFam" id="3.30.160.810:FF:000001">
    <property type="entry name" value="50S ribosomal protein L3"/>
    <property type="match status" value="1"/>
</dbReference>
<dbReference type="Gene3D" id="3.30.160.810">
    <property type="match status" value="1"/>
</dbReference>
<dbReference type="Gene3D" id="2.40.30.10">
    <property type="entry name" value="Translation factors"/>
    <property type="match status" value="1"/>
</dbReference>
<dbReference type="HAMAP" id="MF_01325_B">
    <property type="entry name" value="Ribosomal_uL3_B"/>
    <property type="match status" value="1"/>
</dbReference>
<dbReference type="InterPro" id="IPR000597">
    <property type="entry name" value="Ribosomal_uL3"/>
</dbReference>
<dbReference type="InterPro" id="IPR019927">
    <property type="entry name" value="Ribosomal_uL3_bac/org-type"/>
</dbReference>
<dbReference type="InterPro" id="IPR019926">
    <property type="entry name" value="Ribosomal_uL3_CS"/>
</dbReference>
<dbReference type="InterPro" id="IPR009000">
    <property type="entry name" value="Transl_B-barrel_sf"/>
</dbReference>
<dbReference type="NCBIfam" id="TIGR03625">
    <property type="entry name" value="L3_bact"/>
    <property type="match status" value="1"/>
</dbReference>
<dbReference type="PANTHER" id="PTHR11229">
    <property type="entry name" value="50S RIBOSOMAL PROTEIN L3"/>
    <property type="match status" value="1"/>
</dbReference>
<dbReference type="PANTHER" id="PTHR11229:SF16">
    <property type="entry name" value="LARGE RIBOSOMAL SUBUNIT PROTEIN UL3C"/>
    <property type="match status" value="1"/>
</dbReference>
<dbReference type="Pfam" id="PF00297">
    <property type="entry name" value="Ribosomal_L3"/>
    <property type="match status" value="1"/>
</dbReference>
<dbReference type="SUPFAM" id="SSF50447">
    <property type="entry name" value="Translation proteins"/>
    <property type="match status" value="1"/>
</dbReference>
<dbReference type="PROSITE" id="PS00474">
    <property type="entry name" value="RIBOSOMAL_L3"/>
    <property type="match status" value="1"/>
</dbReference>
<reference key="1">
    <citation type="journal article" date="2007" name="Genome Res.">
        <title>Genome characteristics of facultatively symbiotic Frankia sp. strains reflect host range and host plant biogeography.</title>
        <authorList>
            <person name="Normand P."/>
            <person name="Lapierre P."/>
            <person name="Tisa L.S."/>
            <person name="Gogarten J.P."/>
            <person name="Alloisio N."/>
            <person name="Bagnarol E."/>
            <person name="Bassi C.A."/>
            <person name="Berry A.M."/>
            <person name="Bickhart D.M."/>
            <person name="Choisne N."/>
            <person name="Couloux A."/>
            <person name="Cournoyer B."/>
            <person name="Cruveiller S."/>
            <person name="Daubin V."/>
            <person name="Demange N."/>
            <person name="Francino M.P."/>
            <person name="Goltsman E."/>
            <person name="Huang Y."/>
            <person name="Kopp O.R."/>
            <person name="Labarre L."/>
            <person name="Lapidus A."/>
            <person name="Lavire C."/>
            <person name="Marechal J."/>
            <person name="Martinez M."/>
            <person name="Mastronunzio J.E."/>
            <person name="Mullin B.C."/>
            <person name="Niemann J."/>
            <person name="Pujic P."/>
            <person name="Rawnsley T."/>
            <person name="Rouy Z."/>
            <person name="Schenowitz C."/>
            <person name="Sellstedt A."/>
            <person name="Tavares F."/>
            <person name="Tomkins J.P."/>
            <person name="Vallenet D."/>
            <person name="Valverde C."/>
            <person name="Wall L.G."/>
            <person name="Wang Y."/>
            <person name="Medigue C."/>
            <person name="Benson D.R."/>
        </authorList>
    </citation>
    <scope>NUCLEOTIDE SEQUENCE [LARGE SCALE GENOMIC DNA]</scope>
    <source>
        <strain>DSM 45986 / CECT 9034 / ACN14a</strain>
    </source>
</reference>